<feature type="chain" id="PRO_1000009240" description="UPF0102 protein Noca_3248">
    <location>
        <begin position="1"/>
        <end position="124"/>
    </location>
</feature>
<keyword id="KW-1185">Reference proteome</keyword>
<protein>
    <recommendedName>
        <fullName evidence="1">UPF0102 protein Noca_3248</fullName>
    </recommendedName>
</protein>
<sequence length="124" mass="13584">MTSSAAAAIKQALGAYGETLAARHLVGQGMVLLERNWRCEAGEIDLVLRDGDVLVVCEVKTRSSLRYGTPHEAVTDIKVARLRRLASRWVQDRGVAVRDIRIDLVGIVRPRRGSSVVDHVRGIG</sequence>
<gene>
    <name type="ordered locus">Noca_3248</name>
</gene>
<proteinExistence type="inferred from homology"/>
<comment type="similarity">
    <text evidence="1">Belongs to the UPF0102 family.</text>
</comment>
<organism>
    <name type="scientific">Nocardioides sp. (strain ATCC BAA-499 / JS614)</name>
    <dbReference type="NCBI Taxonomy" id="196162"/>
    <lineage>
        <taxon>Bacteria</taxon>
        <taxon>Bacillati</taxon>
        <taxon>Actinomycetota</taxon>
        <taxon>Actinomycetes</taxon>
        <taxon>Propionibacteriales</taxon>
        <taxon>Nocardioidaceae</taxon>
        <taxon>Nocardioides</taxon>
    </lineage>
</organism>
<reference key="1">
    <citation type="submission" date="2006-12" db="EMBL/GenBank/DDBJ databases">
        <title>Complete sequence of chromosome 1 of Nocardioides sp. JS614.</title>
        <authorList>
            <person name="Copeland A."/>
            <person name="Lucas S."/>
            <person name="Lapidus A."/>
            <person name="Barry K."/>
            <person name="Detter J.C."/>
            <person name="Glavina del Rio T."/>
            <person name="Hammon N."/>
            <person name="Israni S."/>
            <person name="Dalin E."/>
            <person name="Tice H."/>
            <person name="Pitluck S."/>
            <person name="Thompson L.S."/>
            <person name="Brettin T."/>
            <person name="Bruce D."/>
            <person name="Han C."/>
            <person name="Tapia R."/>
            <person name="Schmutz J."/>
            <person name="Larimer F."/>
            <person name="Land M."/>
            <person name="Hauser L."/>
            <person name="Kyrpides N."/>
            <person name="Kim E."/>
            <person name="Mattes T."/>
            <person name="Gossett J."/>
            <person name="Richardson P."/>
        </authorList>
    </citation>
    <scope>NUCLEOTIDE SEQUENCE [LARGE SCALE GENOMIC DNA]</scope>
    <source>
        <strain>ATCC BAA-499 / JS614</strain>
    </source>
</reference>
<dbReference type="EMBL" id="CP000509">
    <property type="protein sequence ID" value="ABL82750.1"/>
    <property type="molecule type" value="Genomic_DNA"/>
</dbReference>
<dbReference type="RefSeq" id="WP_011756684.1">
    <property type="nucleotide sequence ID" value="NC_008699.1"/>
</dbReference>
<dbReference type="SMR" id="A1SLR5"/>
<dbReference type="STRING" id="196162.Noca_3248"/>
<dbReference type="KEGG" id="nca:Noca_3248"/>
<dbReference type="eggNOG" id="COG0792">
    <property type="taxonomic scope" value="Bacteria"/>
</dbReference>
<dbReference type="HOGENOM" id="CLU_115353_2_3_11"/>
<dbReference type="OrthoDB" id="9794876at2"/>
<dbReference type="Proteomes" id="UP000000640">
    <property type="component" value="Chromosome"/>
</dbReference>
<dbReference type="GO" id="GO:0003676">
    <property type="term" value="F:nucleic acid binding"/>
    <property type="evidence" value="ECO:0007669"/>
    <property type="project" value="InterPro"/>
</dbReference>
<dbReference type="CDD" id="cd20736">
    <property type="entry name" value="PoNe_Nuclease"/>
    <property type="match status" value="1"/>
</dbReference>
<dbReference type="Gene3D" id="3.40.1350.10">
    <property type="match status" value="1"/>
</dbReference>
<dbReference type="HAMAP" id="MF_00048">
    <property type="entry name" value="UPF0102"/>
    <property type="match status" value="1"/>
</dbReference>
<dbReference type="InterPro" id="IPR011335">
    <property type="entry name" value="Restrct_endonuc-II-like"/>
</dbReference>
<dbReference type="InterPro" id="IPR011856">
    <property type="entry name" value="tRNA_endonuc-like_dom_sf"/>
</dbReference>
<dbReference type="InterPro" id="IPR003509">
    <property type="entry name" value="UPF0102_YraN-like"/>
</dbReference>
<dbReference type="NCBIfam" id="NF009150">
    <property type="entry name" value="PRK12497.1-3"/>
    <property type="match status" value="1"/>
</dbReference>
<dbReference type="NCBIfam" id="NF009154">
    <property type="entry name" value="PRK12497.3-3"/>
    <property type="match status" value="1"/>
</dbReference>
<dbReference type="PANTHER" id="PTHR34039">
    <property type="entry name" value="UPF0102 PROTEIN YRAN"/>
    <property type="match status" value="1"/>
</dbReference>
<dbReference type="PANTHER" id="PTHR34039:SF1">
    <property type="entry name" value="UPF0102 PROTEIN YRAN"/>
    <property type="match status" value="1"/>
</dbReference>
<dbReference type="Pfam" id="PF02021">
    <property type="entry name" value="UPF0102"/>
    <property type="match status" value="1"/>
</dbReference>
<dbReference type="SUPFAM" id="SSF52980">
    <property type="entry name" value="Restriction endonuclease-like"/>
    <property type="match status" value="1"/>
</dbReference>
<evidence type="ECO:0000255" key="1">
    <source>
        <dbReference type="HAMAP-Rule" id="MF_00048"/>
    </source>
</evidence>
<name>Y3248_NOCSJ</name>
<accession>A1SLR5</accession>